<evidence type="ECO:0000255" key="1">
    <source>
        <dbReference type="HAMAP-Rule" id="MF_04015"/>
    </source>
</evidence>
<feature type="chain" id="PRO_0000423768" description="Tripartite terminase subunit 2">
    <location>
        <begin position="1"/>
        <end position="80"/>
    </location>
</feature>
<organismHost>
    <name type="scientific">Homo sapiens</name>
    <name type="common">Human</name>
    <dbReference type="NCBI Taxonomy" id="9606"/>
</organismHost>
<sequence>MEYASDQLLPRDMQILFPTIYCRLNAINYCQYLKTFLVQRAQPAACDHTLVLESKVDTVRQVLRKIVSTDAVFSEARARP</sequence>
<name>TRM2_HHV8P</name>
<comment type="function">
    <text evidence="1">Component of the molecular motor that translocates viral genomic DNA in empty capsid during DNA packaging. Forms a tripartite terminase complex together with TRM1 and TRM3 in the host cytoplasm. Once the complex reaches the host nucleus, it interacts with the capsid portal vertex. This portal forms a ring in which genomic DNA is translocated into the capsid.</text>
</comment>
<comment type="subunit">
    <text evidence="1">Associates with TRM1 and TRM3 to form the tripartite terminase complex.</text>
</comment>
<comment type="subcellular location">
    <subcellularLocation>
        <location evidence="1">Host nucleus</location>
    </subcellularLocation>
    <text evidence="1">Found associated with the external surface of the viral capsid during assembly and DNA packaging, but seems absent in extracellular mature virions.</text>
</comment>
<comment type="similarity">
    <text evidence="1">Belongs to the herpesviridae TRM2 protein family.</text>
</comment>
<organism>
    <name type="scientific">Human herpesvirus 8 type P (isolate GK18)</name>
    <name type="common">HHV-8</name>
    <name type="synonym">Kaposi's sarcoma-associated herpesvirus</name>
    <dbReference type="NCBI Taxonomy" id="868565"/>
    <lineage>
        <taxon>Viruses</taxon>
        <taxon>Duplodnaviria</taxon>
        <taxon>Heunggongvirae</taxon>
        <taxon>Peploviricota</taxon>
        <taxon>Herviviricetes</taxon>
        <taxon>Herpesvirales</taxon>
        <taxon>Orthoherpesviridae</taxon>
        <taxon>Gammaherpesvirinae</taxon>
        <taxon>Rhadinovirus</taxon>
        <taxon>Rhadinovirus humangamma8</taxon>
        <taxon>Human herpesvirus 8</taxon>
    </lineage>
</organism>
<keyword id="KW-1048">Host nucleus</keyword>
<keyword id="KW-1185">Reference proteome</keyword>
<keyword id="KW-0231">Viral genome packaging</keyword>
<keyword id="KW-1188">Viral release from host cell</keyword>
<reference key="1">
    <citation type="journal article" date="1999" name="J. Virol.">
        <title>Identification of a spliced gene from Kaposi's sarcoma-associated herpesvirus encoding a protein with similarities to latent membrane proteins 1 and 2A of Epstein-Barr virus.</title>
        <authorList>
            <person name="Glenn M."/>
            <person name="Rainbow L."/>
            <person name="Aurade F."/>
            <person name="Davison A."/>
            <person name="Schulz T.F."/>
        </authorList>
    </citation>
    <scope>NUCLEOTIDE SEQUENCE [LARGE SCALE GENOMIC DNA]</scope>
</reference>
<reference key="2">
    <citation type="journal article" date="2006" name="J. Gen. Virol.">
        <title>Kaposi's sarcoma-associated herpesvirus immune modulation: an overview.</title>
        <authorList>
            <person name="Rezaee S.A.R."/>
            <person name="Cunningham C."/>
            <person name="Davison A.J."/>
            <person name="Blackbourn D.J."/>
        </authorList>
    </citation>
    <scope>NUCLEOTIDE SEQUENCE [LARGE SCALE GENOMIC DNA]</scope>
</reference>
<accession>F5H9W4</accession>
<protein>
    <recommendedName>
        <fullName evidence="1">Tripartite terminase subunit 2</fullName>
    </recommendedName>
</protein>
<dbReference type="EMBL" id="AF148805">
    <property type="protein sequence ID" value="ABD28923.1"/>
    <property type="molecule type" value="Genomic_DNA"/>
</dbReference>
<dbReference type="RefSeq" id="YP_001129425.1">
    <property type="nucleotide sequence ID" value="NC_009333.1"/>
</dbReference>
<dbReference type="SMR" id="F5H9W4"/>
<dbReference type="DNASU" id="4961467"/>
<dbReference type="GeneID" id="4961467"/>
<dbReference type="KEGG" id="vg:4961467"/>
<dbReference type="Proteomes" id="UP000000942">
    <property type="component" value="Segment"/>
</dbReference>
<dbReference type="GO" id="GO:0042025">
    <property type="term" value="C:host cell nucleus"/>
    <property type="evidence" value="ECO:0007669"/>
    <property type="project" value="UniProtKB-SubCell"/>
</dbReference>
<dbReference type="GO" id="GO:0019073">
    <property type="term" value="P:viral DNA genome packaging"/>
    <property type="evidence" value="ECO:0007669"/>
    <property type="project" value="InterPro"/>
</dbReference>
<dbReference type="HAMAP" id="MF_04015">
    <property type="entry name" value="HSV_TRM2"/>
    <property type="match status" value="1"/>
</dbReference>
<dbReference type="InterPro" id="IPR005208">
    <property type="entry name" value="Herpes_TT2"/>
</dbReference>
<dbReference type="Pfam" id="PF03581">
    <property type="entry name" value="Herpes_UL33"/>
    <property type="match status" value="1"/>
</dbReference>
<gene>
    <name evidence="1" type="primary">TRM2</name>
    <name type="ordered locus">ORF67A</name>
</gene>
<proteinExistence type="inferred from homology"/>